<comment type="function">
    <text evidence="4">Necessary for the splicing of pre-mRNA. Binds to the U -enriched regions of plant introns.</text>
</comment>
<comment type="subcellular location">
    <subcellularLocation>
        <location evidence="1">Nucleus</location>
    </subcellularLocation>
</comment>
<comment type="tissue specificity">
    <text evidence="4">Expressed in stems, leaves and apical buds.</text>
</comment>
<comment type="domain">
    <text>N-terminal RS domain has a very strong bias in favor of D over S.</text>
</comment>
<comment type="similarity">
    <text evidence="5">Belongs to the splicing factor SR family.</text>
</comment>
<gene>
    <name type="primary">U2AF65B</name>
</gene>
<keyword id="KW-0507">mRNA processing</keyword>
<keyword id="KW-0508">mRNA splicing</keyword>
<keyword id="KW-0539">Nucleus</keyword>
<keyword id="KW-0677">Repeat</keyword>
<keyword id="KW-0694">RNA-binding</keyword>
<feature type="chain" id="PRO_0000352270" description="Splicing factor U2af large subunit B">
    <location>
        <begin position="1"/>
        <end position="573"/>
    </location>
</feature>
<feature type="domain" description="RRM 1" evidence="2">
    <location>
        <begin position="239"/>
        <end position="322"/>
    </location>
</feature>
<feature type="domain" description="RRM 2" evidence="2">
    <location>
        <begin position="359"/>
        <end position="437"/>
    </location>
</feature>
<feature type="domain" description="RRM 3" evidence="2">
    <location>
        <begin position="478"/>
        <end position="564"/>
    </location>
</feature>
<feature type="region of interest" description="Disordered" evidence="3">
    <location>
        <begin position="1"/>
        <end position="187"/>
    </location>
</feature>
<feature type="compositionally biased region" description="Acidic residues" evidence="3">
    <location>
        <begin position="1"/>
        <end position="12"/>
    </location>
</feature>
<feature type="compositionally biased region" description="Basic and acidic residues" evidence="3">
    <location>
        <begin position="38"/>
        <end position="145"/>
    </location>
</feature>
<feature type="compositionally biased region" description="Basic residues" evidence="3">
    <location>
        <begin position="161"/>
        <end position="173"/>
    </location>
</feature>
<sequence>MPDYEGNGEDIDNYTGGSSPPPKSRSSHGHGPTPDDYSDSKSQHSSRENEKDRDSSRSREKDRERGRDKDRDRDRDRDRGRDRDRGRDRDKDREREKDRDRHHGDRHRDRSDRREKERTRDRDDDDRHRTRDYDQQREHAKDRESRHRHRSRSRGRSEHRSRSRSRSRSKSKRISGFDMAPPTSAMLPGITAAAGQVPGTNPPIPGMFPNMFPLASGQFGALPVMPIQAMTQQATRHARRVYVGGLPAHANEQSVATFFSHVMSAIGGNTAGPGDAVVNVYINYEKKFAFVEMRSVEEASNAMALDGIIFEGAPCKVRRPSDYNPSLAATLGPSQPNPNLNLAAVGLSPGSAGGLEGPDRIFVGGLPYYFTEAQIRELLESFGPLRGFDLVKDRETGNSKGYAFCVYQDVSVTDIACAALNGIKMGDKTLTVRRANQGTTQPKPEQESVLLHAQQQIALQRLMLQPATLATKVLSLTEVISADELNDDEDYQDILEDMRTECGKFGSLVNVVIPRPSPNGEPTPGVGKVFLEYADVDSSSKARQSLNGRKFGGNQVVAVFYPENKFYEGDYDG</sequence>
<dbReference type="EMBL" id="Y18350">
    <property type="protein sequence ID" value="CAA77135.1"/>
    <property type="molecule type" value="mRNA"/>
</dbReference>
<dbReference type="SMR" id="Q9ZR40"/>
<dbReference type="GO" id="GO:0005634">
    <property type="term" value="C:nucleus"/>
    <property type="evidence" value="ECO:0007669"/>
    <property type="project" value="UniProtKB-SubCell"/>
</dbReference>
<dbReference type="GO" id="GO:0003723">
    <property type="term" value="F:RNA binding"/>
    <property type="evidence" value="ECO:0007669"/>
    <property type="project" value="UniProtKB-KW"/>
</dbReference>
<dbReference type="GO" id="GO:0006397">
    <property type="term" value="P:mRNA processing"/>
    <property type="evidence" value="ECO:0007669"/>
    <property type="project" value="UniProtKB-KW"/>
</dbReference>
<dbReference type="GO" id="GO:0008380">
    <property type="term" value="P:RNA splicing"/>
    <property type="evidence" value="ECO:0007669"/>
    <property type="project" value="UniProtKB-KW"/>
</dbReference>
<dbReference type="CDD" id="cd12230">
    <property type="entry name" value="RRM1_U2AF65"/>
    <property type="match status" value="1"/>
</dbReference>
<dbReference type="CDD" id="cd12231">
    <property type="entry name" value="RRM2_U2AF65"/>
    <property type="match status" value="1"/>
</dbReference>
<dbReference type="CDD" id="cd12232">
    <property type="entry name" value="RRM3_U2AF65"/>
    <property type="match status" value="1"/>
</dbReference>
<dbReference type="FunFam" id="3.30.70.330:FF:000057">
    <property type="entry name" value="U2 snRNP auxiliary factor large subunit"/>
    <property type="match status" value="1"/>
</dbReference>
<dbReference type="FunFam" id="3.30.70.330:FF:000111">
    <property type="entry name" value="U2 snRNP auxiliary factor large subunit"/>
    <property type="match status" value="1"/>
</dbReference>
<dbReference type="FunFam" id="3.30.70.330:FF:000225">
    <property type="entry name" value="U2 snRNP auxiliary factor large subunit"/>
    <property type="match status" value="1"/>
</dbReference>
<dbReference type="Gene3D" id="3.30.70.330">
    <property type="match status" value="3"/>
</dbReference>
<dbReference type="InterPro" id="IPR012677">
    <property type="entry name" value="Nucleotide-bd_a/b_plait_sf"/>
</dbReference>
<dbReference type="InterPro" id="IPR035979">
    <property type="entry name" value="RBD_domain_sf"/>
</dbReference>
<dbReference type="InterPro" id="IPR000504">
    <property type="entry name" value="RRM_dom"/>
</dbReference>
<dbReference type="InterPro" id="IPR006529">
    <property type="entry name" value="U2AF_lg"/>
</dbReference>
<dbReference type="NCBIfam" id="TIGR01642">
    <property type="entry name" value="U2AF_lg"/>
    <property type="match status" value="1"/>
</dbReference>
<dbReference type="PANTHER" id="PTHR23139">
    <property type="entry name" value="RNA-BINDING PROTEIN"/>
    <property type="match status" value="1"/>
</dbReference>
<dbReference type="Pfam" id="PF00076">
    <property type="entry name" value="RRM_1"/>
    <property type="match status" value="2"/>
</dbReference>
<dbReference type="SMART" id="SM00360">
    <property type="entry name" value="RRM"/>
    <property type="match status" value="3"/>
</dbReference>
<dbReference type="SUPFAM" id="SSF54928">
    <property type="entry name" value="RNA-binding domain, RBD"/>
    <property type="match status" value="2"/>
</dbReference>
<dbReference type="PROSITE" id="PS50102">
    <property type="entry name" value="RRM"/>
    <property type="match status" value="3"/>
</dbReference>
<evidence type="ECO:0000250" key="1"/>
<evidence type="ECO:0000255" key="2">
    <source>
        <dbReference type="PROSITE-ProRule" id="PRU00176"/>
    </source>
</evidence>
<evidence type="ECO:0000256" key="3">
    <source>
        <dbReference type="SAM" id="MobiDB-lite"/>
    </source>
</evidence>
<evidence type="ECO:0000269" key="4">
    <source>
    </source>
</evidence>
<evidence type="ECO:0000305" key="5"/>
<protein>
    <recommendedName>
        <fullName>Splicing factor U2af large subunit B</fullName>
    </recommendedName>
    <alternativeName>
        <fullName>NpU2AF65b</fullName>
    </alternativeName>
    <alternativeName>
        <fullName>U2 auxiliary factor 65 kDa subunit B</fullName>
    </alternativeName>
    <alternativeName>
        <fullName>U2 small nuclear ribonucleoprotein auxiliary factor large subunit B</fullName>
        <shortName>U2 snRNP auxiliary factor large subunit B</shortName>
    </alternativeName>
</protein>
<name>U2A2B_NICPL</name>
<proteinExistence type="evidence at transcript level"/>
<reference key="1">
    <citation type="journal article" date="1998" name="J. Biol. Chem.">
        <title>Multiple forms of the U2 small nuclear ribonucleoprotein auxiliary factor U2AF subunits expressed in higher plants.</title>
        <authorList>
            <person name="Domon C."/>
            <person name="Lorkovic Z.J."/>
            <person name="Valcarcel J."/>
            <person name="Filipowicz W."/>
        </authorList>
    </citation>
    <scope>NUCLEOTIDE SEQUENCE [MRNA]</scope>
    <scope>FUNCTION</scope>
    <scope>TISSUE SPECIFICITY</scope>
</reference>
<accession>Q9ZR40</accession>
<organism>
    <name type="scientific">Nicotiana plumbaginifolia</name>
    <name type="common">Leadwort-leaved tobacco</name>
    <name type="synonym">Tex-Mex tobacco</name>
    <dbReference type="NCBI Taxonomy" id="4092"/>
    <lineage>
        <taxon>Eukaryota</taxon>
        <taxon>Viridiplantae</taxon>
        <taxon>Streptophyta</taxon>
        <taxon>Embryophyta</taxon>
        <taxon>Tracheophyta</taxon>
        <taxon>Spermatophyta</taxon>
        <taxon>Magnoliopsida</taxon>
        <taxon>eudicotyledons</taxon>
        <taxon>Gunneridae</taxon>
        <taxon>Pentapetalae</taxon>
        <taxon>asterids</taxon>
        <taxon>lamiids</taxon>
        <taxon>Solanales</taxon>
        <taxon>Solanaceae</taxon>
        <taxon>Nicotianoideae</taxon>
        <taxon>Nicotianeae</taxon>
        <taxon>Nicotiana</taxon>
    </lineage>
</organism>